<organism>
    <name type="scientific">Homo sapiens</name>
    <name type="common">Human</name>
    <dbReference type="NCBI Taxonomy" id="9606"/>
    <lineage>
        <taxon>Eukaryota</taxon>
        <taxon>Metazoa</taxon>
        <taxon>Chordata</taxon>
        <taxon>Craniata</taxon>
        <taxon>Vertebrata</taxon>
        <taxon>Euteleostomi</taxon>
        <taxon>Mammalia</taxon>
        <taxon>Eutheria</taxon>
        <taxon>Euarchontoglires</taxon>
        <taxon>Primates</taxon>
        <taxon>Haplorrhini</taxon>
        <taxon>Catarrhini</taxon>
        <taxon>Hominidae</taxon>
        <taxon>Homo</taxon>
    </lineage>
</organism>
<proteinExistence type="evidence at protein level"/>
<sequence>MRGSGPRGAGRRRPPSGGGDTPITPASLAGCYSAPRRAPLWTCLLLCAALRTLLASPSNEVNLLDSRTVMGDLGWIAFPKNGWEEIGEVDENYAPIHTYQVCKVMEQNQNNWLLTSWISNEGASRIFIELKFTLRDCNSLPGGLGTCKETFNMYYFESDDQNGRNIKENQYIKIDTIAADESFTELDLGDRVMKLNTEVRDVGPLSKKGFYLAFQDVGACIALVSVRVYYKKCPSVVRHLAVFPDTITGADSSQLLEVSGSCVNHSVTDEPPKMHCSAEGEWLVPIGKCMCKAGYEEKNGTCQVCRPGFFKASPHIQSCGKCPPHSYTHEEASTSCVCEKDYFRRESDPPTMACTRPPSAPRNAISNVNETSVFLEWIPPADTGGRKDVSYYIACKKCNSHAGVCEECGGHVRYLPRQSGLKNTSVMMVDLLAHTNYTFEIEAVNGVSDLSPGARQYVSVNVTTNQAAPSPVTNVKKGKIAKNSISLSWQEPDRPNGIILEYEIKYFEKDQETSYTIIKSKETTITAEGLKPASVYVFQIRARTAAGYGVFSRRFEFETTPVFAASSDQSQIPVIAVSVTVGVILLAVVIGVLLSGSCCECGCGRASSLCAVAHPSLIWRCGYSKAKQDPEEEKMHFHNGHIKLPGVRTYIDPHTYEDPNQAVHEFAKEIEASCITIERVIGAGEFGEVCSGRLKLPGKRELPVAIKTLKVGYTEKQRRDFLGEASIMGQFDHPNIIHLEGVVTKSKPVMIVTEYMENGSLDTFLKKNDGQFTVIQLVGMLRGISAGMKYLSDMGYVHRDLAARNILINSNLVCKVSDFGLSRVLEDDPEAAYTTRGGKIPIRWTAPEAIAFRKFTSASDVWSYGIVMWEVVSYGERPYWEMTNQDVIKAVEEGYRLPSPMDCPAALYQLMLDCWQKERNSRPKFDEIVNMLDKLIRNPSSLKTLVNASCRVSNLLAEHSPLGSGAYRSVGEWLEAIKMGRYTEIFMENGYSSMDAVAQVTLEDLRRLGVTLVGHQKKIMNSLQEMKVQLVNGMVPL</sequence>
<evidence type="ECO:0000250" key="1"/>
<evidence type="ECO:0000250" key="2">
    <source>
        <dbReference type="UniProtKB" id="P54757"/>
    </source>
</evidence>
<evidence type="ECO:0000250" key="3">
    <source>
        <dbReference type="UniProtKB" id="Q60629"/>
    </source>
</evidence>
<evidence type="ECO:0000255" key="4"/>
<evidence type="ECO:0000255" key="5">
    <source>
        <dbReference type="PROSITE-ProRule" id="PRU00159"/>
    </source>
</evidence>
<evidence type="ECO:0000255" key="6">
    <source>
        <dbReference type="PROSITE-ProRule" id="PRU00184"/>
    </source>
</evidence>
<evidence type="ECO:0000255" key="7">
    <source>
        <dbReference type="PROSITE-ProRule" id="PRU00316"/>
    </source>
</evidence>
<evidence type="ECO:0000255" key="8">
    <source>
        <dbReference type="PROSITE-ProRule" id="PRU00883"/>
    </source>
</evidence>
<evidence type="ECO:0000255" key="9">
    <source>
        <dbReference type="PROSITE-ProRule" id="PRU10028"/>
    </source>
</evidence>
<evidence type="ECO:0000256" key="10">
    <source>
        <dbReference type="SAM" id="MobiDB-lite"/>
    </source>
</evidence>
<evidence type="ECO:0000269" key="11">
    <source>
    </source>
</evidence>
<evidence type="ECO:0000269" key="12">
    <source>
    </source>
</evidence>
<evidence type="ECO:0000269" key="13">
    <source>
    </source>
</evidence>
<evidence type="ECO:0000303" key="14">
    <source>
    </source>
</evidence>
<evidence type="ECO:0000305" key="15"/>
<evidence type="ECO:0007829" key="16">
    <source>
        <dbReference type="PDB" id="2R2P"/>
    </source>
</evidence>
<evidence type="ECO:0007829" key="17">
    <source>
        <dbReference type="PDB" id="4ET7"/>
    </source>
</evidence>
<comment type="function">
    <text evidence="1">Receptor tyrosine kinase which binds promiscuously GPI-anchored ephrin-A family ligands residing on adjacent cells, leading to contact-dependent bidirectional signaling into neighboring cells. The signaling pathway downstream of the receptor is referred to as forward signaling while the signaling pathway downstream of the ephrin ligand is referred to as reverse signaling. Among GPI-anchored ephrin-A ligands, EFNA5 most probably constitutes the cognate/functional ligand for EPHA5. Functions as an axon guidance molecule during development and may be involved in the development of the retinotectal, entorhino-hippocampal and hippocamposeptal pathways. Together with EFNA5 plays also a role in synaptic plasticity in adult brain through regulation of synaptogenesis. In addition to its function in the nervous system, the interaction of EPHA5 with EFNA5 mediates communication between pancreatic islet cells to regulate glucose-stimulated insulin secretion (By similarity).</text>
</comment>
<comment type="catalytic activity">
    <reaction evidence="9">
        <text>L-tyrosyl-[protein] + ATP = O-phospho-L-tyrosyl-[protein] + ADP + H(+)</text>
        <dbReference type="Rhea" id="RHEA:10596"/>
        <dbReference type="Rhea" id="RHEA-COMP:10136"/>
        <dbReference type="Rhea" id="RHEA-COMP:20101"/>
        <dbReference type="ChEBI" id="CHEBI:15378"/>
        <dbReference type="ChEBI" id="CHEBI:30616"/>
        <dbReference type="ChEBI" id="CHEBI:46858"/>
        <dbReference type="ChEBI" id="CHEBI:61978"/>
        <dbReference type="ChEBI" id="CHEBI:456216"/>
        <dbReference type="EC" id="2.7.10.1"/>
    </reaction>
</comment>
<comment type="subunit">
    <text evidence="1 3">Heterotetramer upon binding of the ligand. The heterotetramer is composed of an ephrin dimer and a receptor dimer. Oligomerization is probably required to induce biological responses (By similarity). Interacts (via SAM domain) with SAMD5 (via SAM domain) (By similarity).</text>
</comment>
<comment type="interaction">
    <interactant intactId="EBI-1383718">
        <id>P54756</id>
    </interactant>
    <interactant intactId="EBI-702104">
        <id>P29317</id>
        <label>EPHA2</label>
    </interactant>
    <organismsDiffer>false</organismsDiffer>
    <experiments>3</experiments>
</comment>
<comment type="interaction">
    <interactant intactId="EBI-1383718">
        <id>P54756</id>
    </interactant>
    <interactant intactId="EBI-702121">
        <id>P54760</id>
        <label>EPHB4</label>
    </interactant>
    <organismsDiffer>false</organismsDiffer>
    <experiments>2</experiments>
</comment>
<comment type="subcellular location">
    <subcellularLocation>
        <location evidence="11">Cell membrane</location>
        <topology evidence="4">Single-pass type I membrane protein</topology>
    </subcellularLocation>
    <subcellularLocation>
        <location evidence="2">Cell projection</location>
        <location evidence="2">Axon</location>
    </subcellularLocation>
    <subcellularLocation>
        <location evidence="11 13">Cell projection</location>
        <location evidence="11 13">Dendrite</location>
    </subcellularLocation>
</comment>
<comment type="alternative products">
    <event type="alternative splicing"/>
    <isoform>
        <id>P54756-1</id>
        <name>1</name>
        <sequence type="displayed"/>
    </isoform>
    <isoform>
        <id>P54756-2</id>
        <name>2</name>
        <sequence type="described" ref="VSP_002999"/>
    </isoform>
    <isoform>
        <id>P54756-3</id>
        <name>3</name>
        <sequence type="described" ref="VSP_039118 VSP_039119"/>
    </isoform>
    <text>Additional isoforms seem to exist.</text>
</comment>
<comment type="tissue specificity">
    <text evidence="11 13">Almost exclusively expressed in the nervous system in cortical neurons, cerebellar Purkinje cells and pyramidal neurons within the cortex and hippocampus. Display an increasing gradient of expression from the forebrain to hindbrain and spinal cord.</text>
</comment>
<comment type="PTM">
    <text evidence="1">Phosphorylated. Phosphorylation is stimulated by the ligand EFNA5. Dephosphorylation upon stimulation by glucose, inhibits EPHA5 forward signaling and results in insulin secretion (By similarity).</text>
</comment>
<comment type="similarity">
    <text evidence="5">Belongs to the protein kinase superfamily. Tyr protein kinase family. Ephrin receptor subfamily.</text>
</comment>
<feature type="signal peptide" evidence="4">
    <location>
        <begin position="1"/>
        <end position="24"/>
    </location>
</feature>
<feature type="chain" id="PRO_0000016812" description="Ephrin type-A receptor 5">
    <location>
        <begin position="25"/>
        <end position="1037"/>
    </location>
</feature>
<feature type="topological domain" description="Extracellular" evidence="4">
    <location>
        <begin position="25"/>
        <end position="573"/>
    </location>
</feature>
<feature type="transmembrane region" description="Helical" evidence="4">
    <location>
        <begin position="574"/>
        <end position="594"/>
    </location>
</feature>
<feature type="topological domain" description="Cytoplasmic" evidence="4">
    <location>
        <begin position="595"/>
        <end position="1037"/>
    </location>
</feature>
<feature type="domain" description="Eph LBD" evidence="8">
    <location>
        <begin position="60"/>
        <end position="238"/>
    </location>
</feature>
<feature type="domain" description="Fibronectin type-III 1" evidence="7">
    <location>
        <begin position="357"/>
        <end position="467"/>
    </location>
</feature>
<feature type="domain" description="Fibronectin type-III 2" evidence="7">
    <location>
        <begin position="468"/>
        <end position="562"/>
    </location>
</feature>
<feature type="domain" description="Protein kinase" evidence="5">
    <location>
        <begin position="675"/>
        <end position="936"/>
    </location>
</feature>
<feature type="domain" description="SAM" evidence="6">
    <location>
        <begin position="965"/>
        <end position="1029"/>
    </location>
</feature>
<feature type="region of interest" description="Disordered" evidence="10">
    <location>
        <begin position="1"/>
        <end position="24"/>
    </location>
</feature>
<feature type="short sequence motif" description="PDZ-binding" evidence="4">
    <location>
        <begin position="1035"/>
        <end position="1037"/>
    </location>
</feature>
<feature type="active site" description="Proton acceptor" evidence="5 9">
    <location>
        <position position="800"/>
    </location>
</feature>
<feature type="binding site" evidence="5">
    <location>
        <begin position="681"/>
        <end position="689"/>
    </location>
    <ligand>
        <name>ATP</name>
        <dbReference type="ChEBI" id="CHEBI:30616"/>
    </ligand>
</feature>
<feature type="binding site" evidence="5">
    <location>
        <position position="707"/>
    </location>
    <ligand>
        <name>ATP</name>
        <dbReference type="ChEBI" id="CHEBI:30616"/>
    </ligand>
</feature>
<feature type="modified residue" description="Phosphotyrosine; by autocatalysis" evidence="1">
    <location>
        <position position="650"/>
    </location>
</feature>
<feature type="modified residue" description="Phosphotyrosine; by autocatalysis" evidence="1">
    <location>
        <position position="656"/>
    </location>
</feature>
<feature type="modified residue" description="Phosphotyrosine; by autocatalysis" evidence="4">
    <location>
        <position position="833"/>
    </location>
</feature>
<feature type="modified residue" description="Phosphotyrosine; by autocatalysis" evidence="1">
    <location>
        <position position="982"/>
    </location>
</feature>
<feature type="glycosylation site" description="N-linked (GlcNAc...) asparagine" evidence="4">
    <location>
        <position position="264"/>
    </location>
</feature>
<feature type="glycosylation site" description="N-linked (GlcNAc...) asparagine" evidence="4">
    <location>
        <position position="299"/>
    </location>
</feature>
<feature type="glycosylation site" description="N-linked (GlcNAc...) asparagine" evidence="4">
    <location>
        <position position="369"/>
    </location>
</feature>
<feature type="glycosylation site" description="N-linked (GlcNAc...) asparagine" evidence="4">
    <location>
        <position position="423"/>
    </location>
</feature>
<feature type="glycosylation site" description="N-linked (GlcNAc...) asparagine" evidence="4">
    <location>
        <position position="436"/>
    </location>
</feature>
<feature type="glycosylation site" description="N-linked (GlcNAc...) asparagine" evidence="4">
    <location>
        <position position="461"/>
    </location>
</feature>
<feature type="splice variant" id="VSP_039118" description="In isoform 3." evidence="14">
    <location>
        <begin position="1"/>
        <end position="69"/>
    </location>
</feature>
<feature type="splice variant" id="VSP_039119" description="In isoform 3." evidence="14">
    <original>F</original>
    <variation>SV</variation>
    <location>
        <position position="563"/>
    </location>
</feature>
<feature type="splice variant" id="VSP_002999" description="In isoform 2." evidence="15">
    <original>SCCECGCGRASSLCAVAHPSLIW</original>
    <variation>R</variation>
    <location>
        <begin position="597"/>
        <end position="619"/>
    </location>
</feature>
<feature type="sequence variant" id="VAR_042138" description="In dbSNP:rs33932471." evidence="12">
    <original>N</original>
    <variation>T</variation>
    <location>
        <position position="81"/>
    </location>
</feature>
<feature type="sequence variant" id="VAR_042139" description="In dbSNP:rs55710198." evidence="12">
    <original>S</original>
    <variation>A</variation>
    <location>
        <position position="235"/>
    </location>
</feature>
<feature type="sequence variant" id="VAR_042140" description="In dbSNP:rs56205382." evidence="12">
    <original>E</original>
    <variation>Q</variation>
    <location>
        <position position="330"/>
    </location>
</feature>
<feature type="sequence variant" id="VAR_042141" description="In a lung adenocarcinoma sample; somatic mutation; dbSNP:rs199614818." evidence="12">
    <original>R</original>
    <variation>Q</variation>
    <location>
        <position position="417"/>
    </location>
</feature>
<feature type="sequence variant" id="VAR_042142" description="In a lung large cell carcinoma sample; somatic mutation; dbSNP:rs2149036541." evidence="12">
    <original>E</original>
    <variation>K</variation>
    <location>
        <position position="503"/>
    </location>
</feature>
<feature type="sequence variant" id="VAR_045912" description="In dbSNP:rs56074660." evidence="12">
    <original>Y</original>
    <variation>C</variation>
    <location>
        <position position="506"/>
    </location>
</feature>
<feature type="sequence variant" id="VAR_042143" description="In a lung adenocarcinoma sample; somatic mutation; dbSNP:rs1057520012." evidence="12">
    <original>G</original>
    <variation>E</variation>
    <location>
        <position position="582"/>
    </location>
</feature>
<feature type="sequence variant" id="VAR_042144" description="In dbSNP:rs36050417." evidence="12">
    <original>A</original>
    <variation>T</variation>
    <location>
        <position position="672"/>
    </location>
</feature>
<feature type="sequence variant" id="VAR_042145" description="In dbSNP:rs56359290." evidence="12">
    <original>S</original>
    <variation>T</variation>
    <location>
        <position position="673"/>
    </location>
</feature>
<feature type="sequence variant" id="VAR_042146" description="In a lung squamous cell carcinoma sample; somatic mutation; dbSNP:rs2148842583." evidence="12">
    <original>T</original>
    <variation>I</variation>
    <location>
        <position position="856"/>
    </location>
</feature>
<feature type="sequence variant" id="VAR_042147" description="In dbSNP:rs56312931." evidence="12">
    <original>H</original>
    <variation>R</variation>
    <location>
        <position position="959"/>
    </location>
</feature>
<feature type="sequence variant" id="VAR_042148" description="In a lung large cell carcinoma sample; somatic mutation." evidence="12">
    <original>N</original>
    <variation>S</variation>
    <location>
        <position position="1032"/>
    </location>
</feature>
<feature type="sequence conflict" description="In Ref. 1; CAA64700." evidence="15" ref="1">
    <original>R</original>
    <variation>H</variation>
    <location>
        <position position="11"/>
    </location>
</feature>
<feature type="sequence conflict" description="In Ref. 3; CAD97914." evidence="15" ref="3">
    <original>G</original>
    <variation>D</variation>
    <location>
        <position position="87"/>
    </location>
</feature>
<feature type="sequence conflict" description="In Ref. 1; CAA64700." evidence="15" ref="1">
    <original>Y</original>
    <variation>H</variation>
    <location>
        <position position="506"/>
    </location>
</feature>
<feature type="sequence conflict" description="In Ref. 3; CAD97914." evidence="15" ref="3">
    <original>A</original>
    <variation>V</variation>
    <location>
        <position position="611"/>
    </location>
</feature>
<feature type="sequence conflict" description="In Ref. 1; CAA64700." evidence="15" ref="1">
    <original>S</original>
    <variation>I</variation>
    <location>
        <position position="616"/>
    </location>
</feature>
<feature type="sequence conflict" description="In Ref. 3; CAD97914." evidence="15" ref="3">
    <original>G</original>
    <variation>E</variation>
    <location>
        <position position="820"/>
    </location>
</feature>
<feature type="strand" evidence="17">
    <location>
        <begin position="61"/>
        <end position="65"/>
    </location>
</feature>
<feature type="turn" evidence="17">
    <location>
        <begin position="66"/>
        <end position="68"/>
    </location>
</feature>
<feature type="strand" evidence="17">
    <location>
        <begin position="76"/>
        <end position="89"/>
    </location>
</feature>
<feature type="strand" evidence="17">
    <location>
        <begin position="95"/>
        <end position="101"/>
    </location>
</feature>
<feature type="strand" evidence="17">
    <location>
        <begin position="105"/>
        <end position="107"/>
    </location>
</feature>
<feature type="strand" evidence="17">
    <location>
        <begin position="111"/>
        <end position="114"/>
    </location>
</feature>
<feature type="strand" evidence="17">
    <location>
        <begin position="126"/>
        <end position="135"/>
    </location>
</feature>
<feature type="helix" evidence="17">
    <location>
        <begin position="137"/>
        <end position="139"/>
    </location>
</feature>
<feature type="strand" evidence="17">
    <location>
        <begin position="148"/>
        <end position="157"/>
    </location>
</feature>
<feature type="helix" evidence="17">
    <location>
        <begin position="166"/>
        <end position="168"/>
    </location>
</feature>
<feature type="strand" evidence="17">
    <location>
        <begin position="172"/>
        <end position="178"/>
    </location>
</feature>
<feature type="strand" evidence="17">
    <location>
        <begin position="188"/>
        <end position="192"/>
    </location>
</feature>
<feature type="strand" evidence="17">
    <location>
        <begin position="196"/>
        <end position="202"/>
    </location>
</feature>
<feature type="strand" evidence="17">
    <location>
        <begin position="207"/>
        <end position="219"/>
    </location>
</feature>
<feature type="strand" evidence="17">
    <location>
        <begin position="221"/>
        <end position="230"/>
    </location>
</feature>
<feature type="helix" evidence="16">
    <location>
        <begin position="663"/>
        <end position="665"/>
    </location>
</feature>
<feature type="helix" evidence="16">
    <location>
        <begin position="672"/>
        <end position="674"/>
    </location>
</feature>
<feature type="strand" evidence="16">
    <location>
        <begin position="675"/>
        <end position="683"/>
    </location>
</feature>
<feature type="strand" evidence="16">
    <location>
        <begin position="685"/>
        <end position="694"/>
    </location>
</feature>
<feature type="strand" evidence="16">
    <location>
        <begin position="702"/>
        <end position="708"/>
    </location>
</feature>
<feature type="helix" evidence="16">
    <location>
        <begin position="715"/>
        <end position="728"/>
    </location>
</feature>
<feature type="strand" evidence="16">
    <location>
        <begin position="739"/>
        <end position="743"/>
    </location>
</feature>
<feature type="strand" evidence="16">
    <location>
        <begin position="745"/>
        <end position="748"/>
    </location>
</feature>
<feature type="strand" evidence="16">
    <location>
        <begin position="750"/>
        <end position="754"/>
    </location>
</feature>
<feature type="helix" evidence="16">
    <location>
        <begin position="761"/>
        <end position="766"/>
    </location>
</feature>
<feature type="turn" evidence="16">
    <location>
        <begin position="767"/>
        <end position="770"/>
    </location>
</feature>
<feature type="helix" evidence="16">
    <location>
        <begin position="774"/>
        <end position="793"/>
    </location>
</feature>
<feature type="helix" evidence="16">
    <location>
        <begin position="803"/>
        <end position="805"/>
    </location>
</feature>
<feature type="strand" evidence="16">
    <location>
        <begin position="806"/>
        <end position="808"/>
    </location>
</feature>
<feature type="strand" evidence="16">
    <location>
        <begin position="814"/>
        <end position="816"/>
    </location>
</feature>
<feature type="helix" evidence="16">
    <location>
        <begin position="842"/>
        <end position="844"/>
    </location>
</feature>
<feature type="helix" evidence="16">
    <location>
        <begin position="847"/>
        <end position="852"/>
    </location>
</feature>
<feature type="helix" evidence="16">
    <location>
        <begin position="857"/>
        <end position="873"/>
    </location>
</feature>
<feature type="turn" evidence="16">
    <location>
        <begin position="878"/>
        <end position="881"/>
    </location>
</feature>
<feature type="helix" evidence="16">
    <location>
        <begin position="884"/>
        <end position="893"/>
    </location>
</feature>
<feature type="helix" evidence="16">
    <location>
        <begin position="905"/>
        <end position="914"/>
    </location>
</feature>
<feature type="helix" evidence="16">
    <location>
        <begin position="919"/>
        <end position="921"/>
    </location>
</feature>
<feature type="helix" evidence="16">
    <location>
        <begin position="925"/>
        <end position="936"/>
    </location>
</feature>
<reference key="1">
    <citation type="journal article" date="1997" name="Brain Res. Mol. Brain Res.">
        <title>Extensive splice variation and localization of the EHK-1 receptor tyrosine kinase in adult human brain and glial tumors.</title>
        <authorList>
            <person name="Miescher G.C."/>
            <person name="Taylor V."/>
            <person name="Olivieri G."/>
            <person name="Mindermann T."/>
            <person name="Shrock E."/>
            <person name="Steck A.J."/>
        </authorList>
    </citation>
    <scope>NUCLEOTIDE SEQUENCE [MRNA] (ISOFORM 1)</scope>
    <scope>SUBCELLULAR LOCATION</scope>
    <scope>TISSUE SPECIFICITY</scope>
    <source>
        <tissue>Brain</tissue>
    </source>
</reference>
<reference key="2">
    <citation type="journal article" date="2005" name="Nature">
        <title>Generation and annotation of the DNA sequences of human chromosomes 2 and 4.</title>
        <authorList>
            <person name="Hillier L.W."/>
            <person name="Graves T.A."/>
            <person name="Fulton R.S."/>
            <person name="Fulton L.A."/>
            <person name="Pepin K.H."/>
            <person name="Minx P."/>
            <person name="Wagner-McPherson C."/>
            <person name="Layman D."/>
            <person name="Wylie K."/>
            <person name="Sekhon M."/>
            <person name="Becker M.C."/>
            <person name="Fewell G.A."/>
            <person name="Delehaunty K.D."/>
            <person name="Miner T.L."/>
            <person name="Nash W.E."/>
            <person name="Kremitzki C."/>
            <person name="Oddy L."/>
            <person name="Du H."/>
            <person name="Sun H."/>
            <person name="Bradshaw-Cordum H."/>
            <person name="Ali J."/>
            <person name="Carter J."/>
            <person name="Cordes M."/>
            <person name="Harris A."/>
            <person name="Isak A."/>
            <person name="van Brunt A."/>
            <person name="Nguyen C."/>
            <person name="Du F."/>
            <person name="Courtney L."/>
            <person name="Kalicki J."/>
            <person name="Ozersky P."/>
            <person name="Abbott S."/>
            <person name="Armstrong J."/>
            <person name="Belter E.A."/>
            <person name="Caruso L."/>
            <person name="Cedroni M."/>
            <person name="Cotton M."/>
            <person name="Davidson T."/>
            <person name="Desai A."/>
            <person name="Elliott G."/>
            <person name="Erb T."/>
            <person name="Fronick C."/>
            <person name="Gaige T."/>
            <person name="Haakenson W."/>
            <person name="Haglund K."/>
            <person name="Holmes A."/>
            <person name="Harkins R."/>
            <person name="Kim K."/>
            <person name="Kruchowski S.S."/>
            <person name="Strong C.M."/>
            <person name="Grewal N."/>
            <person name="Goyea E."/>
            <person name="Hou S."/>
            <person name="Levy A."/>
            <person name="Martinka S."/>
            <person name="Mead K."/>
            <person name="McLellan M.D."/>
            <person name="Meyer R."/>
            <person name="Randall-Maher J."/>
            <person name="Tomlinson C."/>
            <person name="Dauphin-Kohlberg S."/>
            <person name="Kozlowicz-Reilly A."/>
            <person name="Shah N."/>
            <person name="Swearengen-Shahid S."/>
            <person name="Snider J."/>
            <person name="Strong J.T."/>
            <person name="Thompson J."/>
            <person name="Yoakum M."/>
            <person name="Leonard S."/>
            <person name="Pearman C."/>
            <person name="Trani L."/>
            <person name="Radionenko M."/>
            <person name="Waligorski J.E."/>
            <person name="Wang C."/>
            <person name="Rock S.M."/>
            <person name="Tin-Wollam A.-M."/>
            <person name="Maupin R."/>
            <person name="Latreille P."/>
            <person name="Wendl M.C."/>
            <person name="Yang S.-P."/>
            <person name="Pohl C."/>
            <person name="Wallis J.W."/>
            <person name="Spieth J."/>
            <person name="Bieri T.A."/>
            <person name="Berkowicz N."/>
            <person name="Nelson J.O."/>
            <person name="Osborne J."/>
            <person name="Ding L."/>
            <person name="Meyer R."/>
            <person name="Sabo A."/>
            <person name="Shotland Y."/>
            <person name="Sinha P."/>
            <person name="Wohldmann P.E."/>
            <person name="Cook L.L."/>
            <person name="Hickenbotham M.T."/>
            <person name="Eldred J."/>
            <person name="Williams D."/>
            <person name="Jones T.A."/>
            <person name="She X."/>
            <person name="Ciccarelli F.D."/>
            <person name="Izaurralde E."/>
            <person name="Taylor J."/>
            <person name="Schmutz J."/>
            <person name="Myers R.M."/>
            <person name="Cox D.R."/>
            <person name="Huang X."/>
            <person name="McPherson J.D."/>
            <person name="Mardis E.R."/>
            <person name="Clifton S.W."/>
            <person name="Warren W.C."/>
            <person name="Chinwalla A.T."/>
            <person name="Eddy S.R."/>
            <person name="Marra M.A."/>
            <person name="Ovcharenko I."/>
            <person name="Furey T.S."/>
            <person name="Miller W."/>
            <person name="Eichler E.E."/>
            <person name="Bork P."/>
            <person name="Suyama M."/>
            <person name="Torrents D."/>
            <person name="Waterston R.H."/>
            <person name="Wilson R.K."/>
        </authorList>
    </citation>
    <scope>NUCLEOTIDE SEQUENCE [LARGE SCALE GENOMIC DNA]</scope>
</reference>
<reference key="3">
    <citation type="journal article" date="2007" name="BMC Genomics">
        <title>The full-ORF clone resource of the German cDNA consortium.</title>
        <authorList>
            <person name="Bechtel S."/>
            <person name="Rosenfelder H."/>
            <person name="Duda A."/>
            <person name="Schmidt C.P."/>
            <person name="Ernst U."/>
            <person name="Wellenreuther R."/>
            <person name="Mehrle A."/>
            <person name="Schuster C."/>
            <person name="Bahr A."/>
            <person name="Bloecker H."/>
            <person name="Heubner D."/>
            <person name="Hoerlein A."/>
            <person name="Michel G."/>
            <person name="Wedler H."/>
            <person name="Koehrer K."/>
            <person name="Ottenwaelder B."/>
            <person name="Poustka A."/>
            <person name="Wiemann S."/>
            <person name="Schupp I."/>
        </authorList>
    </citation>
    <scope>NUCLEOTIDE SEQUENCE [LARGE SCALE MRNA] (ISOFORM 3)</scope>
    <source>
        <tissue>Retina</tissue>
    </source>
</reference>
<reference key="4">
    <citation type="journal article" date="1995" name="Oncogene">
        <title>cDNA cloning and tissue distribution of five human EPH-like receptor protein-tyrosine kinases.</title>
        <authorList>
            <person name="Fox G.M."/>
            <person name="Holst P.L."/>
            <person name="Chute H.T."/>
            <person name="Lindberg R.A."/>
            <person name="Janssen A.M."/>
            <person name="Basu R."/>
            <person name="Welcher A.A."/>
        </authorList>
    </citation>
    <scope>NUCLEOTIDE SEQUENCE [MRNA] OF 25-1037</scope>
    <source>
        <tissue>Brain</tissue>
    </source>
</reference>
<reference key="5">
    <citation type="journal article" date="1995" name="Neuron">
        <title>Cloning of AL-1, a ligand for an Eph-related tyrosine kinase receptor involved in axon bundle formation.</title>
        <authorList>
            <person name="Winslow J.W."/>
            <person name="Moran P."/>
            <person name="Valverde J."/>
            <person name="Shih A."/>
            <person name="Yuan J.Q."/>
            <person name="Wong S.C."/>
            <person name="Tsai S.P."/>
            <person name="Goddard A."/>
            <person name="Henzel W.J."/>
            <person name="Hefti F."/>
            <person name="Beck K.D."/>
            <person name="Caras I.W."/>
        </authorList>
    </citation>
    <scope>IDENTIFICATION OF EFNA5 AS LIGAND</scope>
    <scope>PHOSPHORYLATION</scope>
</reference>
<reference key="6">
    <citation type="journal article" date="1997" name="Cell">
        <title>Unified nomenclature for Eph family receptors and their ligands, the ephrins.</title>
        <authorList>
            <consortium name="Eph nomenclature committee"/>
        </authorList>
    </citation>
    <scope>NOMENCLATURE</scope>
</reference>
<reference key="7">
    <citation type="journal article" date="1999" name="J. Histochem. Cytochem.">
        <title>Immunohistochemical localization of EphA5 in the adult human central nervous system.</title>
        <authorList>
            <person name="Olivieri G."/>
            <person name="Miescher G.C."/>
        </authorList>
    </citation>
    <scope>SUBCELLULAR LOCATION</scope>
    <scope>TISSUE SPECIFICITY</scope>
</reference>
<reference key="8">
    <citation type="journal article" date="2007" name="Nature">
        <title>Patterns of somatic mutation in human cancer genomes.</title>
        <authorList>
            <person name="Greenman C."/>
            <person name="Stephens P."/>
            <person name="Smith R."/>
            <person name="Dalgliesh G.L."/>
            <person name="Hunter C."/>
            <person name="Bignell G."/>
            <person name="Davies H."/>
            <person name="Teague J."/>
            <person name="Butler A."/>
            <person name="Stevens C."/>
            <person name="Edkins S."/>
            <person name="O'Meara S."/>
            <person name="Vastrik I."/>
            <person name="Schmidt E.E."/>
            <person name="Avis T."/>
            <person name="Barthorpe S."/>
            <person name="Bhamra G."/>
            <person name="Buck G."/>
            <person name="Choudhury B."/>
            <person name="Clements J."/>
            <person name="Cole J."/>
            <person name="Dicks E."/>
            <person name="Forbes S."/>
            <person name="Gray K."/>
            <person name="Halliday K."/>
            <person name="Harrison R."/>
            <person name="Hills K."/>
            <person name="Hinton J."/>
            <person name="Jenkinson A."/>
            <person name="Jones D."/>
            <person name="Menzies A."/>
            <person name="Mironenko T."/>
            <person name="Perry J."/>
            <person name="Raine K."/>
            <person name="Richardson D."/>
            <person name="Shepherd R."/>
            <person name="Small A."/>
            <person name="Tofts C."/>
            <person name="Varian J."/>
            <person name="Webb T."/>
            <person name="West S."/>
            <person name="Widaa S."/>
            <person name="Yates A."/>
            <person name="Cahill D.P."/>
            <person name="Louis D.N."/>
            <person name="Goldstraw P."/>
            <person name="Nicholson A.G."/>
            <person name="Brasseur F."/>
            <person name="Looijenga L."/>
            <person name="Weber B.L."/>
            <person name="Chiew Y.-E."/>
            <person name="DeFazio A."/>
            <person name="Greaves M.F."/>
            <person name="Green A.R."/>
            <person name="Campbell P."/>
            <person name="Birney E."/>
            <person name="Easton D.F."/>
            <person name="Chenevix-Trench G."/>
            <person name="Tan M.-H."/>
            <person name="Khoo S.K."/>
            <person name="Teh B.T."/>
            <person name="Yuen S.T."/>
            <person name="Leung S.Y."/>
            <person name="Wooster R."/>
            <person name="Futreal P.A."/>
            <person name="Stratton M.R."/>
        </authorList>
    </citation>
    <scope>VARIANTS [LARGE SCALE ANALYSIS] THR-81; ALA-235; GLN-330; GLN-417; LYS-503; CYS-506; GLU-582; THR-672; THR-673; ILE-856; ARG-959 AND SER-1032</scope>
</reference>
<accession>P54756</accession>
<accession>Q7Z3F2</accession>
<protein>
    <recommendedName>
        <fullName>Ephrin type-A receptor 5</fullName>
        <ecNumber>2.7.10.1</ecNumber>
    </recommendedName>
    <alternativeName>
        <fullName>Brain-specific kinase</fullName>
    </alternativeName>
    <alternativeName>
        <fullName>EPH homology kinase 1</fullName>
        <shortName>EHK-1</shortName>
    </alternativeName>
    <alternativeName>
        <fullName>EPH-like kinase 7</fullName>
        <shortName>EK7</shortName>
        <shortName>hEK7</shortName>
    </alternativeName>
</protein>
<keyword id="KW-0002">3D-structure</keyword>
<keyword id="KW-0025">Alternative splicing</keyword>
<keyword id="KW-0067">ATP-binding</keyword>
<keyword id="KW-1003">Cell membrane</keyword>
<keyword id="KW-0966">Cell projection</keyword>
<keyword id="KW-0325">Glycoprotein</keyword>
<keyword id="KW-0418">Kinase</keyword>
<keyword id="KW-0472">Membrane</keyword>
<keyword id="KW-0524">Neurogenesis</keyword>
<keyword id="KW-0547">Nucleotide-binding</keyword>
<keyword id="KW-0597">Phosphoprotein</keyword>
<keyword id="KW-1267">Proteomics identification</keyword>
<keyword id="KW-0675">Receptor</keyword>
<keyword id="KW-1185">Reference proteome</keyword>
<keyword id="KW-0677">Repeat</keyword>
<keyword id="KW-0732">Signal</keyword>
<keyword id="KW-0808">Transferase</keyword>
<keyword id="KW-0812">Transmembrane</keyword>
<keyword id="KW-1133">Transmembrane helix</keyword>
<keyword id="KW-0829">Tyrosine-protein kinase</keyword>
<dbReference type="EC" id="2.7.10.1"/>
<dbReference type="EMBL" id="X95425">
    <property type="protein sequence ID" value="CAA64700.1"/>
    <property type="molecule type" value="mRNA"/>
</dbReference>
<dbReference type="EMBL" id="AC018683">
    <property type="status" value="NOT_ANNOTATED_CDS"/>
    <property type="molecule type" value="Genomic_DNA"/>
</dbReference>
<dbReference type="EMBL" id="AC104137">
    <property type="status" value="NOT_ANNOTATED_CDS"/>
    <property type="molecule type" value="Genomic_DNA"/>
</dbReference>
<dbReference type="EMBL" id="AC105923">
    <property type="status" value="NOT_ANNOTATED_CDS"/>
    <property type="molecule type" value="Genomic_DNA"/>
</dbReference>
<dbReference type="EMBL" id="AC115223">
    <property type="status" value="NOT_ANNOTATED_CDS"/>
    <property type="molecule type" value="Genomic_DNA"/>
</dbReference>
<dbReference type="EMBL" id="BX537946">
    <property type="protein sequence ID" value="CAD97914.1"/>
    <property type="molecule type" value="mRNA"/>
</dbReference>
<dbReference type="EMBL" id="L36644">
    <property type="protein sequence ID" value="AAA74245.1"/>
    <property type="molecule type" value="mRNA"/>
</dbReference>
<dbReference type="CCDS" id="CCDS3513.1">
    <molecule id="P54756-1"/>
</dbReference>
<dbReference type="CCDS" id="CCDS3514.1">
    <molecule id="P54756-2"/>
</dbReference>
<dbReference type="RefSeq" id="NP_001268694.1">
    <property type="nucleotide sequence ID" value="NM_001281765.2"/>
</dbReference>
<dbReference type="RefSeq" id="NP_001268695.1">
    <property type="nucleotide sequence ID" value="NM_001281766.2"/>
</dbReference>
<dbReference type="RefSeq" id="NP_001305690.1">
    <molecule id="P54756-3"/>
    <property type="nucleotide sequence ID" value="NM_001318761.2"/>
</dbReference>
<dbReference type="RefSeq" id="NP_004430.4">
    <molecule id="P54756-1"/>
    <property type="nucleotide sequence ID" value="NM_004439.7"/>
</dbReference>
<dbReference type="RefSeq" id="NP_872272.2">
    <molecule id="P54756-2"/>
    <property type="nucleotide sequence ID" value="NM_182472.5"/>
</dbReference>
<dbReference type="PDB" id="2R2P">
    <property type="method" value="X-ray"/>
    <property type="resolution" value="2.40 A"/>
    <property type="chains" value="A=653-939"/>
</dbReference>
<dbReference type="PDB" id="4ET7">
    <property type="method" value="X-ray"/>
    <property type="resolution" value="2.60 A"/>
    <property type="chains" value="A=59-235"/>
</dbReference>
<dbReference type="PDBsum" id="2R2P"/>
<dbReference type="PDBsum" id="4ET7"/>
<dbReference type="SMR" id="P54756"/>
<dbReference type="BioGRID" id="108358">
    <property type="interactions" value="142"/>
</dbReference>
<dbReference type="FunCoup" id="P54756">
    <property type="interactions" value="1219"/>
</dbReference>
<dbReference type="IntAct" id="P54756">
    <property type="interactions" value="133"/>
</dbReference>
<dbReference type="MINT" id="P54756"/>
<dbReference type="STRING" id="9606.ENSP00000480763"/>
<dbReference type="BindingDB" id="P54756"/>
<dbReference type="ChEMBL" id="CHEMBL3987"/>
<dbReference type="DrugBank" id="DB01254">
    <property type="generic name" value="Dasatinib"/>
</dbReference>
<dbReference type="DrugBank" id="DB12010">
    <property type="generic name" value="Fostamatinib"/>
</dbReference>
<dbReference type="DrugCentral" id="P54756"/>
<dbReference type="GuidetoPHARMACOLOGY" id="1825"/>
<dbReference type="GlyCosmos" id="P54756">
    <property type="glycosylation" value="6 sites, No reported glycans"/>
</dbReference>
<dbReference type="GlyGen" id="P54756">
    <property type="glycosylation" value="10 sites, 3 N-linked glycans (3 sites)"/>
</dbReference>
<dbReference type="iPTMnet" id="P54756"/>
<dbReference type="PhosphoSitePlus" id="P54756"/>
<dbReference type="SwissPalm" id="P54756"/>
<dbReference type="BioMuta" id="EPHA5"/>
<dbReference type="DMDM" id="259016353"/>
<dbReference type="jPOST" id="P54756"/>
<dbReference type="MassIVE" id="P54756"/>
<dbReference type="PaxDb" id="9606-ENSP00000480763"/>
<dbReference type="PeptideAtlas" id="P54756"/>
<dbReference type="ProteomicsDB" id="56712">
    <molecule id="P54756-1"/>
</dbReference>
<dbReference type="ProteomicsDB" id="56713">
    <molecule id="P54756-2"/>
</dbReference>
<dbReference type="ProteomicsDB" id="56714">
    <molecule id="P54756-3"/>
</dbReference>
<dbReference type="TopDownProteomics" id="P54756-2">
    <molecule id="P54756-2"/>
</dbReference>
<dbReference type="ABCD" id="P54756">
    <property type="antibodies" value="4 sequenced antibodies"/>
</dbReference>
<dbReference type="Antibodypedia" id="12603">
    <property type="antibodies" value="537 antibodies from 35 providers"/>
</dbReference>
<dbReference type="DNASU" id="2044"/>
<dbReference type="Ensembl" id="ENST00000273854.7">
    <molecule id="P54756-1"/>
    <property type="protein sequence ID" value="ENSP00000273854.3"/>
    <property type="gene ID" value="ENSG00000145242.14"/>
</dbReference>
<dbReference type="Ensembl" id="ENST00000354839.8">
    <molecule id="P54756-2"/>
    <property type="protein sequence ID" value="ENSP00000346899.4"/>
    <property type="gene ID" value="ENSG00000145242.14"/>
</dbReference>
<dbReference type="GeneID" id="2044"/>
<dbReference type="KEGG" id="hsa:2044"/>
<dbReference type="UCSC" id="uc003hcy.5">
    <molecule id="P54756-1"/>
    <property type="organism name" value="human"/>
</dbReference>
<dbReference type="AGR" id="HGNC:3389"/>
<dbReference type="CTD" id="2044"/>
<dbReference type="DisGeNET" id="2044"/>
<dbReference type="GeneCards" id="EPHA5"/>
<dbReference type="HGNC" id="HGNC:3389">
    <property type="gene designation" value="EPHA5"/>
</dbReference>
<dbReference type="HPA" id="ENSG00000145242">
    <property type="expression patterns" value="Tissue enriched (brain)"/>
</dbReference>
<dbReference type="MalaCards" id="EPHA5"/>
<dbReference type="MIM" id="600004">
    <property type="type" value="gene"/>
</dbReference>
<dbReference type="neXtProt" id="NX_P54756"/>
<dbReference type="OpenTargets" id="ENSG00000145242"/>
<dbReference type="PharmGKB" id="PA27821"/>
<dbReference type="VEuPathDB" id="HostDB:ENSG00000145242"/>
<dbReference type="eggNOG" id="KOG0196">
    <property type="taxonomic scope" value="Eukaryota"/>
</dbReference>
<dbReference type="GeneTree" id="ENSGT00940000156266"/>
<dbReference type="HOGENOM" id="CLU_000288_141_4_1"/>
<dbReference type="InParanoid" id="P54756"/>
<dbReference type="OMA" id="VAWTWTW"/>
<dbReference type="OrthoDB" id="4062651at2759"/>
<dbReference type="PAN-GO" id="P54756">
    <property type="GO annotations" value="8 GO annotations based on evolutionary models"/>
</dbReference>
<dbReference type="PhylomeDB" id="P54756"/>
<dbReference type="TreeFam" id="TF315608"/>
<dbReference type="BRENDA" id="2.7.10.1">
    <property type="organism ID" value="2681"/>
</dbReference>
<dbReference type="PathwayCommons" id="P54756"/>
<dbReference type="Reactome" id="R-HSA-2682334">
    <property type="pathway name" value="EPH-Ephrin signaling"/>
</dbReference>
<dbReference type="Reactome" id="R-HSA-3928663">
    <property type="pathway name" value="EPHA-mediated growth cone collapse"/>
</dbReference>
<dbReference type="Reactome" id="R-HSA-3928665">
    <property type="pathway name" value="EPH-ephrin mediated repulsion of cells"/>
</dbReference>
<dbReference type="SignaLink" id="P54756"/>
<dbReference type="SIGNOR" id="P54756"/>
<dbReference type="BioGRID-ORCS" id="2044">
    <property type="hits" value="11 hits in 1193 CRISPR screens"/>
</dbReference>
<dbReference type="ChiTaRS" id="EPHA5">
    <property type="organism name" value="human"/>
</dbReference>
<dbReference type="EvolutionaryTrace" id="P54756"/>
<dbReference type="GeneWiki" id="EPH_receptor_A5"/>
<dbReference type="GenomeRNAi" id="2044"/>
<dbReference type="Pharos" id="P54756">
    <property type="development level" value="Tchem"/>
</dbReference>
<dbReference type="PRO" id="PR:P54756"/>
<dbReference type="Proteomes" id="UP000005640">
    <property type="component" value="Chromosome 4"/>
</dbReference>
<dbReference type="RNAct" id="P54756">
    <property type="molecule type" value="protein"/>
</dbReference>
<dbReference type="Bgee" id="ENSG00000145242">
    <property type="expression patterns" value="Expressed in cortical plate and 100 other cell types or tissues"/>
</dbReference>
<dbReference type="ExpressionAtlas" id="P54756">
    <property type="expression patterns" value="baseline and differential"/>
</dbReference>
<dbReference type="GO" id="GO:0030424">
    <property type="term" value="C:axon"/>
    <property type="evidence" value="ECO:0000250"/>
    <property type="project" value="UniProtKB"/>
</dbReference>
<dbReference type="GO" id="GO:0030425">
    <property type="term" value="C:dendrite"/>
    <property type="evidence" value="ECO:0000314"/>
    <property type="project" value="UniProtKB"/>
</dbReference>
<dbReference type="GO" id="GO:0009897">
    <property type="term" value="C:external side of plasma membrane"/>
    <property type="evidence" value="ECO:0000314"/>
    <property type="project" value="UniProtKB"/>
</dbReference>
<dbReference type="GO" id="GO:0043025">
    <property type="term" value="C:neuronal cell body"/>
    <property type="evidence" value="ECO:0000314"/>
    <property type="project" value="UniProtKB"/>
</dbReference>
<dbReference type="GO" id="GO:0048471">
    <property type="term" value="C:perinuclear region of cytoplasm"/>
    <property type="evidence" value="ECO:0000314"/>
    <property type="project" value="UniProtKB"/>
</dbReference>
<dbReference type="GO" id="GO:0005886">
    <property type="term" value="C:plasma membrane"/>
    <property type="evidence" value="ECO:0000314"/>
    <property type="project" value="UniProtKB"/>
</dbReference>
<dbReference type="GO" id="GO:0005791">
    <property type="term" value="C:rough endoplasmic reticulum"/>
    <property type="evidence" value="ECO:0000314"/>
    <property type="project" value="UniProtKB"/>
</dbReference>
<dbReference type="GO" id="GO:0005524">
    <property type="term" value="F:ATP binding"/>
    <property type="evidence" value="ECO:0007669"/>
    <property type="project" value="UniProtKB-KW"/>
</dbReference>
<dbReference type="GO" id="GO:0005003">
    <property type="term" value="F:ephrin receptor activity"/>
    <property type="evidence" value="ECO:0000250"/>
    <property type="project" value="UniProtKB"/>
</dbReference>
<dbReference type="GO" id="GO:0005004">
    <property type="term" value="F:GPI-linked ephrin receptor activity"/>
    <property type="evidence" value="ECO:0000250"/>
    <property type="project" value="UniProtKB"/>
</dbReference>
<dbReference type="GO" id="GO:0005005">
    <property type="term" value="F:transmembrane-ephrin receptor activity"/>
    <property type="evidence" value="ECO:0000318"/>
    <property type="project" value="GO_Central"/>
</dbReference>
<dbReference type="GO" id="GO:0007411">
    <property type="term" value="P:axon guidance"/>
    <property type="evidence" value="ECO:0000250"/>
    <property type="project" value="UniProtKB"/>
</dbReference>
<dbReference type="GO" id="GO:0048013">
    <property type="term" value="P:ephrin receptor signaling pathway"/>
    <property type="evidence" value="ECO:0000250"/>
    <property type="project" value="UniProtKB"/>
</dbReference>
<dbReference type="GO" id="GO:0021766">
    <property type="term" value="P:hippocampus development"/>
    <property type="evidence" value="ECO:0000250"/>
    <property type="project" value="UniProtKB"/>
</dbReference>
<dbReference type="GO" id="GO:0048666">
    <property type="term" value="P:neuron development"/>
    <property type="evidence" value="ECO:0000270"/>
    <property type="project" value="UniProtKB"/>
</dbReference>
<dbReference type="GO" id="GO:0032793">
    <property type="term" value="P:positive regulation of CREB transcription factor activity"/>
    <property type="evidence" value="ECO:0000250"/>
    <property type="project" value="UniProtKB"/>
</dbReference>
<dbReference type="GO" id="GO:0032956">
    <property type="term" value="P:regulation of actin cytoskeleton organization"/>
    <property type="evidence" value="ECO:0000250"/>
    <property type="project" value="UniProtKB"/>
</dbReference>
<dbReference type="GO" id="GO:0043087">
    <property type="term" value="P:regulation of GTPase activity"/>
    <property type="evidence" value="ECO:0000250"/>
    <property type="project" value="UniProtKB"/>
</dbReference>
<dbReference type="GO" id="GO:0061178">
    <property type="term" value="P:regulation of insulin secretion involved in cellular response to glucose stimulus"/>
    <property type="evidence" value="ECO:0000250"/>
    <property type="project" value="UniProtKB"/>
</dbReference>
<dbReference type="CDD" id="cd10483">
    <property type="entry name" value="EphR_LBD_A5"/>
    <property type="match status" value="1"/>
</dbReference>
<dbReference type="CDD" id="cd00063">
    <property type="entry name" value="FN3"/>
    <property type="match status" value="2"/>
</dbReference>
<dbReference type="CDD" id="cd05066">
    <property type="entry name" value="PTKc_EphR_A"/>
    <property type="match status" value="1"/>
</dbReference>
<dbReference type="CDD" id="cd09546">
    <property type="entry name" value="SAM_EPH-A5"/>
    <property type="match status" value="1"/>
</dbReference>
<dbReference type="FunFam" id="2.60.40.10:FF:000041">
    <property type="entry name" value="ephrin type-A receptor 3"/>
    <property type="match status" value="1"/>
</dbReference>
<dbReference type="FunFam" id="1.10.150.50:FF:000001">
    <property type="entry name" value="Ephrin type-A receptor 5"/>
    <property type="match status" value="1"/>
</dbReference>
<dbReference type="FunFam" id="1.10.510.10:FF:000019">
    <property type="entry name" value="Ephrin type-A receptor 5"/>
    <property type="match status" value="1"/>
</dbReference>
<dbReference type="FunFam" id="2.10.50.10:FF:000001">
    <property type="entry name" value="Ephrin type-A receptor 5"/>
    <property type="match status" value="1"/>
</dbReference>
<dbReference type="FunFam" id="2.60.40.10:FF:000045">
    <property type="entry name" value="Ephrin type-A receptor 5"/>
    <property type="match status" value="1"/>
</dbReference>
<dbReference type="FunFam" id="2.60.40.1770:FF:000001">
    <property type="entry name" value="Ephrin type-A receptor 5"/>
    <property type="match status" value="1"/>
</dbReference>
<dbReference type="FunFam" id="3.30.200.20:FF:000001">
    <property type="entry name" value="Ephrin type-A receptor 5"/>
    <property type="match status" value="1"/>
</dbReference>
<dbReference type="FunFam" id="2.60.120.260:FF:000001">
    <property type="entry name" value="Ephrin type-A receptor 7"/>
    <property type="match status" value="1"/>
</dbReference>
<dbReference type="Gene3D" id="2.60.40.1770">
    <property type="entry name" value="ephrin a2 ectodomain"/>
    <property type="match status" value="1"/>
</dbReference>
<dbReference type="Gene3D" id="2.60.120.260">
    <property type="entry name" value="Galactose-binding domain-like"/>
    <property type="match status" value="1"/>
</dbReference>
<dbReference type="Gene3D" id="2.60.40.10">
    <property type="entry name" value="Immunoglobulins"/>
    <property type="match status" value="2"/>
</dbReference>
<dbReference type="Gene3D" id="3.30.200.20">
    <property type="entry name" value="Phosphorylase Kinase, domain 1"/>
    <property type="match status" value="1"/>
</dbReference>
<dbReference type="Gene3D" id="1.10.150.50">
    <property type="entry name" value="Transcription Factor, Ets-1"/>
    <property type="match status" value="1"/>
</dbReference>
<dbReference type="Gene3D" id="1.10.510.10">
    <property type="entry name" value="Transferase(Phosphotransferase) domain 1"/>
    <property type="match status" value="1"/>
</dbReference>
<dbReference type="Gene3D" id="2.10.50.10">
    <property type="entry name" value="Tumor Necrosis Factor Receptor, subunit A, domain 2"/>
    <property type="match status" value="1"/>
</dbReference>
<dbReference type="InterPro" id="IPR027936">
    <property type="entry name" value="Eph_TM"/>
</dbReference>
<dbReference type="InterPro" id="IPR034277">
    <property type="entry name" value="EphA5_rcpt_lig-bd"/>
</dbReference>
<dbReference type="InterPro" id="IPR001090">
    <property type="entry name" value="Ephrin_rcpt_lig-bd_dom"/>
</dbReference>
<dbReference type="InterPro" id="IPR050449">
    <property type="entry name" value="Ephrin_rcpt_TKs"/>
</dbReference>
<dbReference type="InterPro" id="IPR003961">
    <property type="entry name" value="FN3_dom"/>
</dbReference>
<dbReference type="InterPro" id="IPR036116">
    <property type="entry name" value="FN3_sf"/>
</dbReference>
<dbReference type="InterPro" id="IPR008979">
    <property type="entry name" value="Galactose-bd-like_sf"/>
</dbReference>
<dbReference type="InterPro" id="IPR013783">
    <property type="entry name" value="Ig-like_fold"/>
</dbReference>
<dbReference type="InterPro" id="IPR011009">
    <property type="entry name" value="Kinase-like_dom_sf"/>
</dbReference>
<dbReference type="InterPro" id="IPR000719">
    <property type="entry name" value="Prot_kinase_dom"/>
</dbReference>
<dbReference type="InterPro" id="IPR017441">
    <property type="entry name" value="Protein_kinase_ATP_BS"/>
</dbReference>
<dbReference type="InterPro" id="IPR001660">
    <property type="entry name" value="SAM"/>
</dbReference>
<dbReference type="InterPro" id="IPR013761">
    <property type="entry name" value="SAM/pointed_sf"/>
</dbReference>
<dbReference type="InterPro" id="IPR001245">
    <property type="entry name" value="Ser-Thr/Tyr_kinase_cat_dom"/>
</dbReference>
<dbReference type="InterPro" id="IPR008266">
    <property type="entry name" value="Tyr_kinase_AS"/>
</dbReference>
<dbReference type="InterPro" id="IPR020635">
    <property type="entry name" value="Tyr_kinase_cat_dom"/>
</dbReference>
<dbReference type="InterPro" id="IPR016257">
    <property type="entry name" value="Tyr_kinase_ephrin_rcpt"/>
</dbReference>
<dbReference type="InterPro" id="IPR001426">
    <property type="entry name" value="Tyr_kinase_rcpt_V_CS"/>
</dbReference>
<dbReference type="PANTHER" id="PTHR46877">
    <property type="entry name" value="EPH RECEPTOR A5"/>
    <property type="match status" value="1"/>
</dbReference>
<dbReference type="PANTHER" id="PTHR46877:SF13">
    <property type="entry name" value="EPHRIN TYPE-A RECEPTOR 5"/>
    <property type="match status" value="1"/>
</dbReference>
<dbReference type="Pfam" id="PF14575">
    <property type="entry name" value="EphA2_TM"/>
    <property type="match status" value="1"/>
</dbReference>
<dbReference type="Pfam" id="PF01404">
    <property type="entry name" value="Ephrin_lbd"/>
    <property type="match status" value="1"/>
</dbReference>
<dbReference type="Pfam" id="PF00041">
    <property type="entry name" value="fn3"/>
    <property type="match status" value="2"/>
</dbReference>
<dbReference type="Pfam" id="PF07714">
    <property type="entry name" value="PK_Tyr_Ser-Thr"/>
    <property type="match status" value="1"/>
</dbReference>
<dbReference type="Pfam" id="PF00536">
    <property type="entry name" value="SAM_1"/>
    <property type="match status" value="1"/>
</dbReference>
<dbReference type="PIRSF" id="PIRSF000666">
    <property type="entry name" value="TyrPK_ephrin_receptor"/>
    <property type="match status" value="1"/>
</dbReference>
<dbReference type="PRINTS" id="PR00014">
    <property type="entry name" value="FNTYPEIII"/>
</dbReference>
<dbReference type="PRINTS" id="PR00109">
    <property type="entry name" value="TYRKINASE"/>
</dbReference>
<dbReference type="SMART" id="SM00615">
    <property type="entry name" value="EPH_lbd"/>
    <property type="match status" value="1"/>
</dbReference>
<dbReference type="SMART" id="SM01411">
    <property type="entry name" value="Ephrin_rec_like"/>
    <property type="match status" value="1"/>
</dbReference>
<dbReference type="SMART" id="SM00060">
    <property type="entry name" value="FN3"/>
    <property type="match status" value="2"/>
</dbReference>
<dbReference type="SMART" id="SM00454">
    <property type="entry name" value="SAM"/>
    <property type="match status" value="1"/>
</dbReference>
<dbReference type="SMART" id="SM00219">
    <property type="entry name" value="TyrKc"/>
    <property type="match status" value="1"/>
</dbReference>
<dbReference type="SUPFAM" id="SSF49265">
    <property type="entry name" value="Fibronectin type III"/>
    <property type="match status" value="1"/>
</dbReference>
<dbReference type="SUPFAM" id="SSF49785">
    <property type="entry name" value="Galactose-binding domain-like"/>
    <property type="match status" value="1"/>
</dbReference>
<dbReference type="SUPFAM" id="SSF56112">
    <property type="entry name" value="Protein kinase-like (PK-like)"/>
    <property type="match status" value="1"/>
</dbReference>
<dbReference type="SUPFAM" id="SSF47769">
    <property type="entry name" value="SAM/Pointed domain"/>
    <property type="match status" value="1"/>
</dbReference>
<dbReference type="PROSITE" id="PS01186">
    <property type="entry name" value="EGF_2"/>
    <property type="match status" value="1"/>
</dbReference>
<dbReference type="PROSITE" id="PS51550">
    <property type="entry name" value="EPH_LBD"/>
    <property type="match status" value="1"/>
</dbReference>
<dbReference type="PROSITE" id="PS50853">
    <property type="entry name" value="FN3"/>
    <property type="match status" value="2"/>
</dbReference>
<dbReference type="PROSITE" id="PS00107">
    <property type="entry name" value="PROTEIN_KINASE_ATP"/>
    <property type="match status" value="1"/>
</dbReference>
<dbReference type="PROSITE" id="PS50011">
    <property type="entry name" value="PROTEIN_KINASE_DOM"/>
    <property type="match status" value="1"/>
</dbReference>
<dbReference type="PROSITE" id="PS00109">
    <property type="entry name" value="PROTEIN_KINASE_TYR"/>
    <property type="match status" value="1"/>
</dbReference>
<dbReference type="PROSITE" id="PS00790">
    <property type="entry name" value="RECEPTOR_TYR_KIN_V_1"/>
    <property type="match status" value="1"/>
</dbReference>
<dbReference type="PROSITE" id="PS00791">
    <property type="entry name" value="RECEPTOR_TYR_KIN_V_2"/>
    <property type="match status" value="1"/>
</dbReference>
<dbReference type="PROSITE" id="PS50105">
    <property type="entry name" value="SAM_DOMAIN"/>
    <property type="match status" value="1"/>
</dbReference>
<name>EPHA5_HUMAN</name>
<gene>
    <name type="primary">EPHA5</name>
    <name type="synonym">BSK</name>
    <name type="synonym">EHK1</name>
    <name type="synonym">HEK7</name>
    <name type="synonym">TYRO4</name>
</gene>